<feature type="chain" id="PRO_1000121506" description="Large ribosomal subunit protein bL12">
    <location>
        <begin position="1"/>
        <end position="121"/>
    </location>
</feature>
<reference key="1">
    <citation type="journal article" date="2008" name="J. Biotechnol.">
        <title>The genome of Xanthomonas campestris pv. campestris B100 and its use for the reconstruction of metabolic pathways involved in xanthan biosynthesis.</title>
        <authorList>
            <person name="Vorhoelter F.-J."/>
            <person name="Schneiker S."/>
            <person name="Goesmann A."/>
            <person name="Krause L."/>
            <person name="Bekel T."/>
            <person name="Kaiser O."/>
            <person name="Linke B."/>
            <person name="Patschkowski T."/>
            <person name="Rueckert C."/>
            <person name="Schmid J."/>
            <person name="Sidhu V.K."/>
            <person name="Sieber V."/>
            <person name="Tauch A."/>
            <person name="Watt S.A."/>
            <person name="Weisshaar B."/>
            <person name="Becker A."/>
            <person name="Niehaus K."/>
            <person name="Puehler A."/>
        </authorList>
    </citation>
    <scope>NUCLEOTIDE SEQUENCE [LARGE SCALE GENOMIC DNA]</scope>
    <source>
        <strain>B100</strain>
    </source>
</reference>
<sequence length="121" mass="12425">MSLTNEQIVDAIAEKSLMEVMELVKAIEEKFGVSAAAPVAAAAAGPAAVVEEQTEFTVVLTSPGANKVAAIKAVRGVTGLGLKEAKDLTEAGGILKEGVSKDEAEKIKKEMTEAGATVEVK</sequence>
<name>RL7_XANCB</name>
<evidence type="ECO:0000255" key="1">
    <source>
        <dbReference type="HAMAP-Rule" id="MF_00368"/>
    </source>
</evidence>
<evidence type="ECO:0000305" key="2"/>
<gene>
    <name evidence="1" type="primary">rplL</name>
    <name type="ordered locus">xcc-b100_3467</name>
</gene>
<accession>B0RU90</accession>
<organism>
    <name type="scientific">Xanthomonas campestris pv. campestris (strain B100)</name>
    <dbReference type="NCBI Taxonomy" id="509169"/>
    <lineage>
        <taxon>Bacteria</taxon>
        <taxon>Pseudomonadati</taxon>
        <taxon>Pseudomonadota</taxon>
        <taxon>Gammaproteobacteria</taxon>
        <taxon>Lysobacterales</taxon>
        <taxon>Lysobacteraceae</taxon>
        <taxon>Xanthomonas</taxon>
    </lineage>
</organism>
<protein>
    <recommendedName>
        <fullName evidence="1">Large ribosomal subunit protein bL12</fullName>
    </recommendedName>
    <alternativeName>
        <fullName evidence="2">50S ribosomal protein L7/L12</fullName>
    </alternativeName>
</protein>
<dbReference type="EMBL" id="AM920689">
    <property type="protein sequence ID" value="CAP52832.1"/>
    <property type="molecule type" value="Genomic_DNA"/>
</dbReference>
<dbReference type="SMR" id="B0RU90"/>
<dbReference type="KEGG" id="xca:xcc-b100_3467"/>
<dbReference type="HOGENOM" id="CLU_086499_3_2_6"/>
<dbReference type="Proteomes" id="UP000001188">
    <property type="component" value="Chromosome"/>
</dbReference>
<dbReference type="GO" id="GO:0022625">
    <property type="term" value="C:cytosolic large ribosomal subunit"/>
    <property type="evidence" value="ECO:0007669"/>
    <property type="project" value="TreeGrafter"/>
</dbReference>
<dbReference type="GO" id="GO:0003729">
    <property type="term" value="F:mRNA binding"/>
    <property type="evidence" value="ECO:0007669"/>
    <property type="project" value="TreeGrafter"/>
</dbReference>
<dbReference type="GO" id="GO:0003735">
    <property type="term" value="F:structural constituent of ribosome"/>
    <property type="evidence" value="ECO:0007669"/>
    <property type="project" value="InterPro"/>
</dbReference>
<dbReference type="GO" id="GO:0006412">
    <property type="term" value="P:translation"/>
    <property type="evidence" value="ECO:0007669"/>
    <property type="project" value="UniProtKB-UniRule"/>
</dbReference>
<dbReference type="CDD" id="cd00387">
    <property type="entry name" value="Ribosomal_L7_L12"/>
    <property type="match status" value="1"/>
</dbReference>
<dbReference type="FunFam" id="1.20.5.710:FF:000003">
    <property type="entry name" value="50S ribosomal protein L7/L12"/>
    <property type="match status" value="1"/>
</dbReference>
<dbReference type="FunFam" id="3.30.1390.10:FF:000001">
    <property type="entry name" value="50S ribosomal protein L7/L12"/>
    <property type="match status" value="1"/>
</dbReference>
<dbReference type="Gene3D" id="3.30.1390.10">
    <property type="match status" value="1"/>
</dbReference>
<dbReference type="Gene3D" id="1.20.5.710">
    <property type="entry name" value="Single helix bin"/>
    <property type="match status" value="1"/>
</dbReference>
<dbReference type="HAMAP" id="MF_00368">
    <property type="entry name" value="Ribosomal_bL12"/>
    <property type="match status" value="1"/>
</dbReference>
<dbReference type="InterPro" id="IPR000206">
    <property type="entry name" value="Ribosomal_bL12"/>
</dbReference>
<dbReference type="InterPro" id="IPR013823">
    <property type="entry name" value="Ribosomal_bL12_C"/>
</dbReference>
<dbReference type="InterPro" id="IPR014719">
    <property type="entry name" value="Ribosomal_bL12_C/ClpS-like"/>
</dbReference>
<dbReference type="InterPro" id="IPR008932">
    <property type="entry name" value="Ribosomal_bL12_oligo"/>
</dbReference>
<dbReference type="InterPro" id="IPR036235">
    <property type="entry name" value="Ribosomal_bL12_oligo_N_sf"/>
</dbReference>
<dbReference type="NCBIfam" id="TIGR00855">
    <property type="entry name" value="L12"/>
    <property type="match status" value="1"/>
</dbReference>
<dbReference type="PANTHER" id="PTHR45987">
    <property type="entry name" value="39S RIBOSOMAL PROTEIN L12"/>
    <property type="match status" value="1"/>
</dbReference>
<dbReference type="PANTHER" id="PTHR45987:SF4">
    <property type="entry name" value="LARGE RIBOSOMAL SUBUNIT PROTEIN BL12M"/>
    <property type="match status" value="1"/>
</dbReference>
<dbReference type="Pfam" id="PF00542">
    <property type="entry name" value="Ribosomal_L12"/>
    <property type="match status" value="1"/>
</dbReference>
<dbReference type="Pfam" id="PF16320">
    <property type="entry name" value="Ribosomal_L12_N"/>
    <property type="match status" value="1"/>
</dbReference>
<dbReference type="SUPFAM" id="SSF54736">
    <property type="entry name" value="ClpS-like"/>
    <property type="match status" value="1"/>
</dbReference>
<dbReference type="SUPFAM" id="SSF48300">
    <property type="entry name" value="Ribosomal protein L7/12, oligomerisation (N-terminal) domain"/>
    <property type="match status" value="1"/>
</dbReference>
<comment type="function">
    <text evidence="1">Forms part of the ribosomal stalk which helps the ribosome interact with GTP-bound translation factors. Is thus essential for accurate translation.</text>
</comment>
<comment type="subunit">
    <text evidence="1">Homodimer. Part of the ribosomal stalk of the 50S ribosomal subunit. Forms a multimeric L10(L12)X complex, where L10 forms an elongated spine to which 2 to 4 L12 dimers bind in a sequential fashion. Binds GTP-bound translation factors.</text>
</comment>
<comment type="similarity">
    <text evidence="1">Belongs to the bacterial ribosomal protein bL12 family.</text>
</comment>
<proteinExistence type="inferred from homology"/>
<keyword id="KW-0687">Ribonucleoprotein</keyword>
<keyword id="KW-0689">Ribosomal protein</keyword>